<comment type="function">
    <text evidence="2">Mediates recognition and avoidance of Streptomyces species by detecting dodecanoic acid secreted by the bacteria. Also mediates avoidance of decanoic acid which is not secreted by Streptomyces species but this may represent an additional important avoidance response in the environment.</text>
</comment>
<comment type="subcellular location">
    <subcellularLocation>
        <location evidence="4">Cell membrane</location>
        <topology evidence="1">Multi-pass membrane protein</topology>
    </subcellularLocation>
</comment>
<comment type="tissue specificity">
    <text evidence="3">Expressed in the ADL, ADF and ASH chemosensory neurons in the head and in the PHA and PHB chemosensory neurons in the tail. Low expression also observed in the egg-laying structures in the mid-body region.</text>
</comment>
<comment type="disruption phenotype">
    <text evidence="2">RNAi-mediated knockdown results in defective head and tail avoidance responses to Streptomyces and to dodecanoic acid. It also results in severely reduced calcium influx into ASH neurons in response to both S.avermitilis and dodecanoic acid.</text>
</comment>
<comment type="similarity">
    <text evidence="4">Belongs to the nematode receptor-like protein srb family.</text>
</comment>
<organism>
    <name type="scientific">Caenorhabditis elegans</name>
    <dbReference type="NCBI Taxonomy" id="6239"/>
    <lineage>
        <taxon>Eukaryota</taxon>
        <taxon>Metazoa</taxon>
        <taxon>Ecdysozoa</taxon>
        <taxon>Nematoda</taxon>
        <taxon>Chromadorea</taxon>
        <taxon>Rhabditida</taxon>
        <taxon>Rhabditina</taxon>
        <taxon>Rhabditomorpha</taxon>
        <taxon>Rhabditoidea</taxon>
        <taxon>Rhabditidae</taxon>
        <taxon>Peloderinae</taxon>
        <taxon>Caenorhabditis</taxon>
    </lineage>
</organism>
<keyword id="KW-1003">Cell membrane</keyword>
<keyword id="KW-0472">Membrane</keyword>
<keyword id="KW-1185">Reference proteome</keyword>
<keyword id="KW-0716">Sensory transduction</keyword>
<keyword id="KW-0812">Transmembrane</keyword>
<keyword id="KW-1133">Transmembrane helix</keyword>
<dbReference type="EMBL" id="Z48795">
    <property type="protein sequence ID" value="CAA88729.1"/>
    <property type="molecule type" value="Genomic_DNA"/>
</dbReference>
<dbReference type="PIR" id="T23942">
    <property type="entry name" value="T23942"/>
</dbReference>
<dbReference type="RefSeq" id="NP_496199.1">
    <property type="nucleotide sequence ID" value="NM_063798.1"/>
</dbReference>
<dbReference type="FunCoup" id="P54141">
    <property type="interactions" value="15"/>
</dbReference>
<dbReference type="STRING" id="6239.R05H5.6.1"/>
<dbReference type="PaxDb" id="6239-R05H5.6"/>
<dbReference type="EnsemblMetazoa" id="R05H5.6.1">
    <property type="protein sequence ID" value="R05H5.6.1"/>
    <property type="gene ID" value="WBGene00005071"/>
</dbReference>
<dbReference type="GeneID" id="191788"/>
<dbReference type="KEGG" id="cel:CELE_R05H5.6"/>
<dbReference type="UCSC" id="R05H5.6">
    <property type="organism name" value="c. elegans"/>
</dbReference>
<dbReference type="AGR" id="WB:WBGene00005071"/>
<dbReference type="CTD" id="191788"/>
<dbReference type="WormBase" id="R05H5.6">
    <property type="protein sequence ID" value="CE02293"/>
    <property type="gene ID" value="WBGene00005071"/>
    <property type="gene designation" value="srb-6"/>
</dbReference>
<dbReference type="eggNOG" id="ENOG502TFE3">
    <property type="taxonomic scope" value="Eukaryota"/>
</dbReference>
<dbReference type="GeneTree" id="ENSGT00970000195867"/>
<dbReference type="HOGENOM" id="CLU_045882_1_0_1"/>
<dbReference type="InParanoid" id="P54141"/>
<dbReference type="OMA" id="SCPMLTI"/>
<dbReference type="OrthoDB" id="5794814at2759"/>
<dbReference type="PhylomeDB" id="P54141"/>
<dbReference type="PRO" id="PR:P54141"/>
<dbReference type="Proteomes" id="UP000001940">
    <property type="component" value="Chromosome II"/>
</dbReference>
<dbReference type="GO" id="GO:0005929">
    <property type="term" value="C:cilium"/>
    <property type="evidence" value="ECO:0000314"/>
    <property type="project" value="UniProtKB"/>
</dbReference>
<dbReference type="GO" id="GO:0005886">
    <property type="term" value="C:plasma membrane"/>
    <property type="evidence" value="ECO:0007669"/>
    <property type="project" value="UniProtKB-SubCell"/>
</dbReference>
<dbReference type="GO" id="GO:0004888">
    <property type="term" value="F:transmembrane signaling receptor activity"/>
    <property type="evidence" value="ECO:0007669"/>
    <property type="project" value="InterPro"/>
</dbReference>
<dbReference type="GO" id="GO:0050830">
    <property type="term" value="P:defense response to Gram-positive bacterium"/>
    <property type="evidence" value="ECO:0000315"/>
    <property type="project" value="UniProtKB"/>
</dbReference>
<dbReference type="GO" id="GO:0009593">
    <property type="term" value="P:detection of chemical stimulus"/>
    <property type="evidence" value="ECO:0000315"/>
    <property type="project" value="UniProtKB"/>
</dbReference>
<dbReference type="GO" id="GO:0007606">
    <property type="term" value="P:sensory perception of chemical stimulus"/>
    <property type="evidence" value="ECO:0007669"/>
    <property type="project" value="InterPro"/>
</dbReference>
<dbReference type="InterPro" id="IPR002184">
    <property type="entry name" value="7TM_GPCR_serpentine_rcpt_Srb"/>
</dbReference>
<dbReference type="PANTHER" id="PTHR31216:SF12">
    <property type="entry name" value="SERPENTINE RECEPTOR CLASS BETA-1-RELATED"/>
    <property type="match status" value="1"/>
</dbReference>
<dbReference type="PANTHER" id="PTHR31216">
    <property type="entry name" value="SERPENTINE RECEPTOR CLASS BETA-1-RELATED-RELATED"/>
    <property type="match status" value="1"/>
</dbReference>
<dbReference type="Pfam" id="PF02175">
    <property type="entry name" value="7TM_GPCR_Srb"/>
    <property type="match status" value="1"/>
</dbReference>
<dbReference type="PRINTS" id="PR00699">
    <property type="entry name" value="TMPROTEINSRB"/>
</dbReference>
<evidence type="ECO:0000255" key="1"/>
<evidence type="ECO:0000269" key="2">
    <source>
    </source>
</evidence>
<evidence type="ECO:0000269" key="3">
    <source>
    </source>
</evidence>
<evidence type="ECO:0000305" key="4"/>
<reference key="1">
    <citation type="journal article" date="1998" name="Science">
        <title>Genome sequence of the nematode C. elegans: a platform for investigating biology.</title>
        <authorList>
            <consortium name="The C. elegans sequencing consortium"/>
        </authorList>
    </citation>
    <scope>NUCLEOTIDE SEQUENCE [LARGE SCALE GENOMIC DNA]</scope>
    <source>
        <strain>Bristol N2</strain>
    </source>
</reference>
<reference key="2">
    <citation type="journal article" date="2017" name="Elife">
        <title>C. elegans avoids toxin-producing Streptomyces using a seven transmembrane domain chemosensory receptor.</title>
        <authorList>
            <person name="Tran A."/>
            <person name="Tang A."/>
            <person name="O'Loughlin C.T."/>
            <person name="Balistreri A."/>
            <person name="Chang E."/>
            <person name="Coto Villa D."/>
            <person name="Li J."/>
            <person name="Varshney A."/>
            <person name="Jimenez V."/>
            <person name="Pyle J."/>
            <person name="Tsujimoto B."/>
            <person name="Wellbrook C."/>
            <person name="Vargas C."/>
            <person name="Duong A."/>
            <person name="Ali N."/>
            <person name="Matthews S.Y."/>
            <person name="Levinson S."/>
            <person name="Woldemariam S."/>
            <person name="Khuri S."/>
            <person name="Bremer M."/>
            <person name="Eggers D.K."/>
            <person name="L'Etoile N."/>
            <person name="Miller Conrad L.C."/>
            <person name="VanHoven M.K."/>
        </authorList>
    </citation>
    <scope>FUNCTION</scope>
    <scope>DISRUPTION PHENOTYPE</scope>
</reference>
<reference key="3">
    <citation type="journal article" date="1995" name="Cell">
        <title>Divergent seven transmembrane receptors are candidate chemosensory receptors in C. elegans.</title>
        <authorList>
            <person name="Troemel E.R."/>
            <person name="Chou J.H."/>
            <person name="Dwyer N.D."/>
            <person name="Colbert H.A."/>
            <person name="Bargmann C.I."/>
        </authorList>
    </citation>
    <scope>TISSUE SPECIFICITY</scope>
</reference>
<protein>
    <recommendedName>
        <fullName>Serpentine receptor class beta-6</fullName>
        <shortName>Protein srb-6</shortName>
    </recommendedName>
</protein>
<accession>P54141</accession>
<name>SRB6_CAEEL</name>
<gene>
    <name type="primary">srb-6</name>
    <name type="ORF">R05H5.6</name>
</gene>
<proteinExistence type="evidence at transcript level"/>
<feature type="chain" id="PRO_0000104500" description="Serpentine receptor class beta-6">
    <location>
        <begin position="1"/>
        <end position="337"/>
    </location>
</feature>
<feature type="transmembrane region" description="Helical" evidence="1">
    <location>
        <begin position="20"/>
        <end position="40"/>
    </location>
</feature>
<feature type="transmembrane region" description="Helical" evidence="1">
    <location>
        <begin position="62"/>
        <end position="82"/>
    </location>
</feature>
<feature type="transmembrane region" description="Helical" evidence="1">
    <location>
        <begin position="98"/>
        <end position="118"/>
    </location>
</feature>
<feature type="transmembrane region" description="Helical" evidence="1">
    <location>
        <begin position="138"/>
        <end position="158"/>
    </location>
</feature>
<feature type="transmembrane region" description="Helical" evidence="1">
    <location>
        <begin position="183"/>
        <end position="203"/>
    </location>
</feature>
<feature type="transmembrane region" description="Helical" evidence="1">
    <location>
        <begin position="234"/>
        <end position="254"/>
    </location>
</feature>
<feature type="transmembrane region" description="Helical" evidence="1">
    <location>
        <begin position="273"/>
        <end position="293"/>
    </location>
</feature>
<sequence length="337" mass="38966">MNDCDEVNNISYDPLYRYSQFYTLLTSIFSVFPLLYLIIFKLRVCTFNDNIKFLYIVYFTQILISVLNNCVVFAHHVVIPFLAVSKCDLLVNPVKNRIFQNIGVFGISCPMLTILGITAERLLALIFARCYENVKLHIGVFIGVFAMLCDMALVYFFFLDEKFDQPSISYFMVPDTSGYKMNWLCYSLLAINSVNLVFNYFLVKINTILKEKWRNSLSTRYQMEENIITTKFSTFISFIHVFFFSLYLIFTLIIRLLGPGFLKTQADLMSVRGVYITIPTYNLIIGIASCVILRHLQRQKVAKVYAEVTLKYSGIDGAQIHQEAILNVWKTKSSGRK</sequence>